<accession>B1ZDL3</accession>
<name>MIAA_METPB</name>
<sequence>MRSSDGQEAGRPAAILIAGPTASGKSALGLRIARAFGGTVINTDSMQVYADLRVLSARPTADEEAEAPHRLYGSVDGAVNFSVGHFQRQAAVILSEMAPDQLPVFVGGTGLYFRSLEDGISDLPEVPEPIRQQIRAEAEGRPTEALHATLTLRDPKTAQRLRPSDRMRVMRALEIFAATGRSIGSFQETRLPGPLAGRPLLKVFLSPEREILRRRIDARFVTMMENGALDEVAALRDRRLDPLLPVMRAHGVPGLIAHLDGALSREEAVQRGQGDTRRYAKRQFTWFRHQMGEAWHWTTPEAAWSLAEALLSAPVGQ</sequence>
<feature type="chain" id="PRO_1000191858" description="tRNA dimethylallyltransferase">
    <location>
        <begin position="1"/>
        <end position="317"/>
    </location>
</feature>
<feature type="region of interest" description="Interaction with substrate tRNA" evidence="1">
    <location>
        <begin position="44"/>
        <end position="47"/>
    </location>
</feature>
<feature type="binding site" evidence="1">
    <location>
        <begin position="19"/>
        <end position="26"/>
    </location>
    <ligand>
        <name>ATP</name>
        <dbReference type="ChEBI" id="CHEBI:30616"/>
    </ligand>
</feature>
<feature type="binding site" evidence="1">
    <location>
        <begin position="21"/>
        <end position="26"/>
    </location>
    <ligand>
        <name>substrate</name>
    </ligand>
</feature>
<feature type="site" description="Interaction with substrate tRNA" evidence="1">
    <location>
        <position position="109"/>
    </location>
</feature>
<feature type="site" description="Interaction with substrate tRNA" evidence="1">
    <location>
        <position position="131"/>
    </location>
</feature>
<keyword id="KW-0067">ATP-binding</keyword>
<keyword id="KW-0460">Magnesium</keyword>
<keyword id="KW-0547">Nucleotide-binding</keyword>
<keyword id="KW-0808">Transferase</keyword>
<keyword id="KW-0819">tRNA processing</keyword>
<evidence type="ECO:0000255" key="1">
    <source>
        <dbReference type="HAMAP-Rule" id="MF_00185"/>
    </source>
</evidence>
<proteinExistence type="inferred from homology"/>
<organism>
    <name type="scientific">Methylorubrum populi (strain ATCC BAA-705 / NCIMB 13946 / BJ001)</name>
    <name type="common">Methylobacterium populi</name>
    <dbReference type="NCBI Taxonomy" id="441620"/>
    <lineage>
        <taxon>Bacteria</taxon>
        <taxon>Pseudomonadati</taxon>
        <taxon>Pseudomonadota</taxon>
        <taxon>Alphaproteobacteria</taxon>
        <taxon>Hyphomicrobiales</taxon>
        <taxon>Methylobacteriaceae</taxon>
        <taxon>Methylorubrum</taxon>
    </lineage>
</organism>
<comment type="function">
    <text evidence="1">Catalyzes the transfer of a dimethylallyl group onto the adenine at position 37 in tRNAs that read codons beginning with uridine, leading to the formation of N6-(dimethylallyl)adenosine (i(6)A).</text>
</comment>
<comment type="catalytic activity">
    <reaction evidence="1">
        <text>adenosine(37) in tRNA + dimethylallyl diphosphate = N(6)-dimethylallyladenosine(37) in tRNA + diphosphate</text>
        <dbReference type="Rhea" id="RHEA:26482"/>
        <dbReference type="Rhea" id="RHEA-COMP:10162"/>
        <dbReference type="Rhea" id="RHEA-COMP:10375"/>
        <dbReference type="ChEBI" id="CHEBI:33019"/>
        <dbReference type="ChEBI" id="CHEBI:57623"/>
        <dbReference type="ChEBI" id="CHEBI:74411"/>
        <dbReference type="ChEBI" id="CHEBI:74415"/>
        <dbReference type="EC" id="2.5.1.75"/>
    </reaction>
</comment>
<comment type="cofactor">
    <cofactor evidence="1">
        <name>Mg(2+)</name>
        <dbReference type="ChEBI" id="CHEBI:18420"/>
    </cofactor>
</comment>
<comment type="subunit">
    <text evidence="1">Monomer.</text>
</comment>
<comment type="similarity">
    <text evidence="1">Belongs to the IPP transferase family.</text>
</comment>
<protein>
    <recommendedName>
        <fullName evidence="1">tRNA dimethylallyltransferase</fullName>
        <ecNumber evidence="1">2.5.1.75</ecNumber>
    </recommendedName>
    <alternativeName>
        <fullName evidence="1">Dimethylallyl diphosphate:tRNA dimethylallyltransferase</fullName>
        <shortName evidence="1">DMAPP:tRNA dimethylallyltransferase</shortName>
        <shortName evidence="1">DMATase</shortName>
    </alternativeName>
    <alternativeName>
        <fullName evidence="1">Isopentenyl-diphosphate:tRNA isopentenyltransferase</fullName>
        <shortName evidence="1">IPP transferase</shortName>
        <shortName evidence="1">IPPT</shortName>
        <shortName evidence="1">IPTase</shortName>
    </alternativeName>
</protein>
<dbReference type="EC" id="2.5.1.75" evidence="1"/>
<dbReference type="EMBL" id="CP001029">
    <property type="protein sequence ID" value="ACB80931.1"/>
    <property type="molecule type" value="Genomic_DNA"/>
</dbReference>
<dbReference type="RefSeq" id="WP_012454653.1">
    <property type="nucleotide sequence ID" value="NC_010725.1"/>
</dbReference>
<dbReference type="SMR" id="B1ZDL3"/>
<dbReference type="STRING" id="441620.Mpop_2776"/>
<dbReference type="KEGG" id="mpo:Mpop_2776"/>
<dbReference type="eggNOG" id="COG0324">
    <property type="taxonomic scope" value="Bacteria"/>
</dbReference>
<dbReference type="HOGENOM" id="CLU_032616_0_1_5"/>
<dbReference type="OrthoDB" id="9776390at2"/>
<dbReference type="Proteomes" id="UP000007136">
    <property type="component" value="Chromosome"/>
</dbReference>
<dbReference type="GO" id="GO:0005524">
    <property type="term" value="F:ATP binding"/>
    <property type="evidence" value="ECO:0007669"/>
    <property type="project" value="UniProtKB-UniRule"/>
</dbReference>
<dbReference type="GO" id="GO:0052381">
    <property type="term" value="F:tRNA dimethylallyltransferase activity"/>
    <property type="evidence" value="ECO:0007669"/>
    <property type="project" value="UniProtKB-UniRule"/>
</dbReference>
<dbReference type="GO" id="GO:0006400">
    <property type="term" value="P:tRNA modification"/>
    <property type="evidence" value="ECO:0007669"/>
    <property type="project" value="TreeGrafter"/>
</dbReference>
<dbReference type="Gene3D" id="1.10.20.140">
    <property type="match status" value="1"/>
</dbReference>
<dbReference type="Gene3D" id="3.40.50.300">
    <property type="entry name" value="P-loop containing nucleotide triphosphate hydrolases"/>
    <property type="match status" value="1"/>
</dbReference>
<dbReference type="HAMAP" id="MF_00185">
    <property type="entry name" value="IPP_trans"/>
    <property type="match status" value="1"/>
</dbReference>
<dbReference type="InterPro" id="IPR039657">
    <property type="entry name" value="Dimethylallyltransferase"/>
</dbReference>
<dbReference type="InterPro" id="IPR018022">
    <property type="entry name" value="IPT"/>
</dbReference>
<dbReference type="InterPro" id="IPR027417">
    <property type="entry name" value="P-loop_NTPase"/>
</dbReference>
<dbReference type="NCBIfam" id="TIGR00174">
    <property type="entry name" value="miaA"/>
    <property type="match status" value="1"/>
</dbReference>
<dbReference type="PANTHER" id="PTHR11088">
    <property type="entry name" value="TRNA DIMETHYLALLYLTRANSFERASE"/>
    <property type="match status" value="1"/>
</dbReference>
<dbReference type="PANTHER" id="PTHR11088:SF60">
    <property type="entry name" value="TRNA DIMETHYLALLYLTRANSFERASE"/>
    <property type="match status" value="1"/>
</dbReference>
<dbReference type="Pfam" id="PF01715">
    <property type="entry name" value="IPPT"/>
    <property type="match status" value="1"/>
</dbReference>
<dbReference type="SUPFAM" id="SSF52540">
    <property type="entry name" value="P-loop containing nucleoside triphosphate hydrolases"/>
    <property type="match status" value="2"/>
</dbReference>
<gene>
    <name evidence="1" type="primary">miaA</name>
    <name type="ordered locus">Mpop_2776</name>
</gene>
<reference key="1">
    <citation type="submission" date="2008-04" db="EMBL/GenBank/DDBJ databases">
        <title>Complete sequence of chromosome of Methylobacterium populi BJ001.</title>
        <authorList>
            <consortium name="US DOE Joint Genome Institute"/>
            <person name="Copeland A."/>
            <person name="Lucas S."/>
            <person name="Lapidus A."/>
            <person name="Glavina del Rio T."/>
            <person name="Dalin E."/>
            <person name="Tice H."/>
            <person name="Bruce D."/>
            <person name="Goodwin L."/>
            <person name="Pitluck S."/>
            <person name="Chertkov O."/>
            <person name="Brettin T."/>
            <person name="Detter J.C."/>
            <person name="Han C."/>
            <person name="Kuske C.R."/>
            <person name="Schmutz J."/>
            <person name="Larimer F."/>
            <person name="Land M."/>
            <person name="Hauser L."/>
            <person name="Kyrpides N."/>
            <person name="Mikhailova N."/>
            <person name="Marx C."/>
            <person name="Richardson P."/>
        </authorList>
    </citation>
    <scope>NUCLEOTIDE SEQUENCE [LARGE SCALE GENOMIC DNA]</scope>
    <source>
        <strain>ATCC BAA-705 / NCIMB 13946 / BJ001</strain>
    </source>
</reference>